<sequence>MEELRVELKDKKYPIYIGYDILKKFLKNYRDNYSFSFIITHSFLYDLYKEDLEISQEGIIYVPVGEKSKSFKEVIRISRELAQRGADRKSAIFAFGGGVIGDLTGFVASIYMRGIRYIQIPTTLLAQVDSSIGGKTGINIKEGKNLIGTFYHPDAVIIDIKTLNTLPEREYRSGIAEVIKYGMIMNQSLFNFLEKNTTSILNKDIDILSHIIRESLICKKYVVEKDEKESSLRMILNFGHTFGHAIEAKGGYKRFLHGEAVAIGMFLATYLAYKIGFCDYSVLKRLQDTLLSFGFDLNNPYRIEDLVGYIKRDKKAYGGKIRLILPKEIGKVEIVENLEEKDIIKALKAGDGYGK</sequence>
<dbReference type="EC" id="4.2.3.4" evidence="1"/>
<dbReference type="EMBL" id="CP001146">
    <property type="protein sequence ID" value="ACI19103.1"/>
    <property type="molecule type" value="Genomic_DNA"/>
</dbReference>
<dbReference type="RefSeq" id="WP_012547735.1">
    <property type="nucleotide sequence ID" value="NC_011297.1"/>
</dbReference>
<dbReference type="SMR" id="B5YE18"/>
<dbReference type="STRING" id="309799.DICTH_0914"/>
<dbReference type="PaxDb" id="309799-DICTH_0914"/>
<dbReference type="KEGG" id="dth:DICTH_0914"/>
<dbReference type="eggNOG" id="COG0337">
    <property type="taxonomic scope" value="Bacteria"/>
</dbReference>
<dbReference type="HOGENOM" id="CLU_001201_0_2_0"/>
<dbReference type="OrthoDB" id="9806583at2"/>
<dbReference type="UniPathway" id="UPA00053">
    <property type="reaction ID" value="UER00085"/>
</dbReference>
<dbReference type="Proteomes" id="UP000001733">
    <property type="component" value="Chromosome"/>
</dbReference>
<dbReference type="GO" id="GO:0005737">
    <property type="term" value="C:cytoplasm"/>
    <property type="evidence" value="ECO:0007669"/>
    <property type="project" value="UniProtKB-SubCell"/>
</dbReference>
<dbReference type="GO" id="GO:0003856">
    <property type="term" value="F:3-dehydroquinate synthase activity"/>
    <property type="evidence" value="ECO:0007669"/>
    <property type="project" value="UniProtKB-UniRule"/>
</dbReference>
<dbReference type="GO" id="GO:0046872">
    <property type="term" value="F:metal ion binding"/>
    <property type="evidence" value="ECO:0007669"/>
    <property type="project" value="UniProtKB-KW"/>
</dbReference>
<dbReference type="GO" id="GO:0000166">
    <property type="term" value="F:nucleotide binding"/>
    <property type="evidence" value="ECO:0007669"/>
    <property type="project" value="UniProtKB-KW"/>
</dbReference>
<dbReference type="GO" id="GO:0008652">
    <property type="term" value="P:amino acid biosynthetic process"/>
    <property type="evidence" value="ECO:0007669"/>
    <property type="project" value="UniProtKB-KW"/>
</dbReference>
<dbReference type="GO" id="GO:0009073">
    <property type="term" value="P:aromatic amino acid family biosynthetic process"/>
    <property type="evidence" value="ECO:0007669"/>
    <property type="project" value="UniProtKB-KW"/>
</dbReference>
<dbReference type="GO" id="GO:0009423">
    <property type="term" value="P:chorismate biosynthetic process"/>
    <property type="evidence" value="ECO:0007669"/>
    <property type="project" value="UniProtKB-UniRule"/>
</dbReference>
<dbReference type="CDD" id="cd08195">
    <property type="entry name" value="DHQS"/>
    <property type="match status" value="1"/>
</dbReference>
<dbReference type="FunFam" id="3.40.50.1970:FF:000007">
    <property type="entry name" value="Pentafunctional AROM polypeptide"/>
    <property type="match status" value="1"/>
</dbReference>
<dbReference type="Gene3D" id="3.40.50.1970">
    <property type="match status" value="1"/>
</dbReference>
<dbReference type="Gene3D" id="1.20.1090.10">
    <property type="entry name" value="Dehydroquinate synthase-like - alpha domain"/>
    <property type="match status" value="1"/>
</dbReference>
<dbReference type="HAMAP" id="MF_00110">
    <property type="entry name" value="DHQ_synthase"/>
    <property type="match status" value="1"/>
</dbReference>
<dbReference type="InterPro" id="IPR050071">
    <property type="entry name" value="Dehydroquinate_synthase"/>
</dbReference>
<dbReference type="InterPro" id="IPR016037">
    <property type="entry name" value="DHQ_synth_AroB"/>
</dbReference>
<dbReference type="InterPro" id="IPR030963">
    <property type="entry name" value="DHQ_synth_fam"/>
</dbReference>
<dbReference type="InterPro" id="IPR030960">
    <property type="entry name" value="DHQS/DOIS_N"/>
</dbReference>
<dbReference type="InterPro" id="IPR056179">
    <property type="entry name" value="DHQS_C"/>
</dbReference>
<dbReference type="NCBIfam" id="TIGR01357">
    <property type="entry name" value="aroB"/>
    <property type="match status" value="1"/>
</dbReference>
<dbReference type="PANTHER" id="PTHR43622">
    <property type="entry name" value="3-DEHYDROQUINATE SYNTHASE"/>
    <property type="match status" value="1"/>
</dbReference>
<dbReference type="PANTHER" id="PTHR43622:SF7">
    <property type="entry name" value="3-DEHYDROQUINATE SYNTHASE, CHLOROPLASTIC"/>
    <property type="match status" value="1"/>
</dbReference>
<dbReference type="Pfam" id="PF01761">
    <property type="entry name" value="DHQ_synthase"/>
    <property type="match status" value="1"/>
</dbReference>
<dbReference type="Pfam" id="PF24621">
    <property type="entry name" value="DHQS_C"/>
    <property type="match status" value="1"/>
</dbReference>
<dbReference type="PIRSF" id="PIRSF001455">
    <property type="entry name" value="DHQ_synth"/>
    <property type="match status" value="1"/>
</dbReference>
<dbReference type="SUPFAM" id="SSF56796">
    <property type="entry name" value="Dehydroquinate synthase-like"/>
    <property type="match status" value="1"/>
</dbReference>
<feature type="chain" id="PRO_1000094504" description="3-dehydroquinate synthase">
    <location>
        <begin position="1"/>
        <end position="355"/>
    </location>
</feature>
<feature type="binding site" evidence="1">
    <location>
        <begin position="98"/>
        <end position="102"/>
    </location>
    <ligand>
        <name>NAD(+)</name>
        <dbReference type="ChEBI" id="CHEBI:57540"/>
    </ligand>
</feature>
<feature type="binding site" evidence="1">
    <location>
        <begin position="122"/>
        <end position="123"/>
    </location>
    <ligand>
        <name>NAD(+)</name>
        <dbReference type="ChEBI" id="CHEBI:57540"/>
    </ligand>
</feature>
<feature type="binding site" evidence="1">
    <location>
        <position position="135"/>
    </location>
    <ligand>
        <name>NAD(+)</name>
        <dbReference type="ChEBI" id="CHEBI:57540"/>
    </ligand>
</feature>
<feature type="binding site" evidence="1">
    <location>
        <position position="144"/>
    </location>
    <ligand>
        <name>NAD(+)</name>
        <dbReference type="ChEBI" id="CHEBI:57540"/>
    </ligand>
</feature>
<feature type="binding site" evidence="1">
    <location>
        <begin position="162"/>
        <end position="165"/>
    </location>
    <ligand>
        <name>NAD(+)</name>
        <dbReference type="ChEBI" id="CHEBI:57540"/>
    </ligand>
</feature>
<feature type="binding site" evidence="1">
    <location>
        <position position="177"/>
    </location>
    <ligand>
        <name>Zn(2+)</name>
        <dbReference type="ChEBI" id="CHEBI:29105"/>
    </ligand>
</feature>
<feature type="binding site" evidence="1">
    <location>
        <position position="240"/>
    </location>
    <ligand>
        <name>Zn(2+)</name>
        <dbReference type="ChEBI" id="CHEBI:29105"/>
    </ligand>
</feature>
<feature type="binding site" evidence="1">
    <location>
        <position position="257"/>
    </location>
    <ligand>
        <name>Zn(2+)</name>
        <dbReference type="ChEBI" id="CHEBI:29105"/>
    </ligand>
</feature>
<comment type="function">
    <text evidence="1">Catalyzes the conversion of 3-deoxy-D-arabino-heptulosonate 7-phosphate (DAHP) to dehydroquinate (DHQ).</text>
</comment>
<comment type="catalytic activity">
    <reaction evidence="1">
        <text>7-phospho-2-dehydro-3-deoxy-D-arabino-heptonate = 3-dehydroquinate + phosphate</text>
        <dbReference type="Rhea" id="RHEA:21968"/>
        <dbReference type="ChEBI" id="CHEBI:32364"/>
        <dbReference type="ChEBI" id="CHEBI:43474"/>
        <dbReference type="ChEBI" id="CHEBI:58394"/>
        <dbReference type="EC" id="4.2.3.4"/>
    </reaction>
</comment>
<comment type="cofactor">
    <cofactor evidence="1">
        <name>Co(2+)</name>
        <dbReference type="ChEBI" id="CHEBI:48828"/>
    </cofactor>
    <cofactor evidence="1">
        <name>Zn(2+)</name>
        <dbReference type="ChEBI" id="CHEBI:29105"/>
    </cofactor>
    <text evidence="1">Binds 1 divalent metal cation per subunit. Can use either Co(2+) or Zn(2+).</text>
</comment>
<comment type="cofactor">
    <cofactor evidence="1">
        <name>NAD(+)</name>
        <dbReference type="ChEBI" id="CHEBI:57540"/>
    </cofactor>
</comment>
<comment type="pathway">
    <text evidence="1">Metabolic intermediate biosynthesis; chorismate biosynthesis; chorismate from D-erythrose 4-phosphate and phosphoenolpyruvate: step 2/7.</text>
</comment>
<comment type="subcellular location">
    <subcellularLocation>
        <location evidence="1">Cytoplasm</location>
    </subcellularLocation>
</comment>
<comment type="similarity">
    <text evidence="1">Belongs to the sugar phosphate cyclases superfamily. Dehydroquinate synthase family.</text>
</comment>
<accession>B5YE18</accession>
<gene>
    <name evidence="1" type="primary">aroB</name>
    <name type="ordered locus">DICTH_0914</name>
</gene>
<organism>
    <name type="scientific">Dictyoglomus thermophilum (strain ATCC 35947 / DSM 3960 / H-6-12)</name>
    <dbReference type="NCBI Taxonomy" id="309799"/>
    <lineage>
        <taxon>Bacteria</taxon>
        <taxon>Pseudomonadati</taxon>
        <taxon>Dictyoglomota</taxon>
        <taxon>Dictyoglomia</taxon>
        <taxon>Dictyoglomales</taxon>
        <taxon>Dictyoglomaceae</taxon>
        <taxon>Dictyoglomus</taxon>
    </lineage>
</organism>
<evidence type="ECO:0000255" key="1">
    <source>
        <dbReference type="HAMAP-Rule" id="MF_00110"/>
    </source>
</evidence>
<reference key="1">
    <citation type="journal article" date="2014" name="Genome Announc.">
        <title>Complete Genome Sequence of the Extreme Thermophile Dictyoglomus thermophilum H-6-12.</title>
        <authorList>
            <person name="Coil D.A."/>
            <person name="Badger J.H."/>
            <person name="Forberger H.C."/>
            <person name="Riggs F."/>
            <person name="Madupu R."/>
            <person name="Fedorova N."/>
            <person name="Ward N."/>
            <person name="Robb F.T."/>
            <person name="Eisen J.A."/>
        </authorList>
    </citation>
    <scope>NUCLEOTIDE SEQUENCE [LARGE SCALE GENOMIC DNA]</scope>
    <source>
        <strain>ATCC 35947 / DSM 3960 / H-6-12</strain>
    </source>
</reference>
<name>AROB_DICT6</name>
<protein>
    <recommendedName>
        <fullName evidence="1">3-dehydroquinate synthase</fullName>
        <shortName evidence="1">DHQS</shortName>
        <ecNumber evidence="1">4.2.3.4</ecNumber>
    </recommendedName>
</protein>
<proteinExistence type="inferred from homology"/>
<keyword id="KW-0028">Amino-acid biosynthesis</keyword>
<keyword id="KW-0057">Aromatic amino acid biosynthesis</keyword>
<keyword id="KW-0170">Cobalt</keyword>
<keyword id="KW-0963">Cytoplasm</keyword>
<keyword id="KW-0456">Lyase</keyword>
<keyword id="KW-0479">Metal-binding</keyword>
<keyword id="KW-0520">NAD</keyword>
<keyword id="KW-0547">Nucleotide-binding</keyword>
<keyword id="KW-0862">Zinc</keyword>